<reference key="1">
    <citation type="journal article" date="2015" name="Genome Announc.">
        <title>Complete Genome Sequence of Methanosphaerula palustris E1-9CT, a Hydrogenotrophic Methanogen Isolated from a Minerotrophic Fen Peatland.</title>
        <authorList>
            <person name="Cadillo-Quiroz H."/>
            <person name="Browne P."/>
            <person name="Kyrpides N."/>
            <person name="Woyke T."/>
            <person name="Goodwin L."/>
            <person name="Detter C."/>
            <person name="Yavitt J.B."/>
            <person name="Zinder S.H."/>
        </authorList>
    </citation>
    <scope>NUCLEOTIDE SEQUENCE [LARGE SCALE GENOMIC DNA]</scope>
    <source>
        <strain>ATCC BAA-1556 / DSM 19958 / E1-9c</strain>
    </source>
</reference>
<comment type="function">
    <text evidence="1">DNA-dependent RNA polymerase (RNAP) catalyzes the transcription of DNA into RNA using the four ribonucleoside triphosphates as substrates.</text>
</comment>
<comment type="catalytic activity">
    <reaction evidence="1">
        <text>RNA(n) + a ribonucleoside 5'-triphosphate = RNA(n+1) + diphosphate</text>
        <dbReference type="Rhea" id="RHEA:21248"/>
        <dbReference type="Rhea" id="RHEA-COMP:14527"/>
        <dbReference type="Rhea" id="RHEA-COMP:17342"/>
        <dbReference type="ChEBI" id="CHEBI:33019"/>
        <dbReference type="ChEBI" id="CHEBI:61557"/>
        <dbReference type="ChEBI" id="CHEBI:140395"/>
        <dbReference type="EC" id="2.7.7.6"/>
    </reaction>
</comment>
<comment type="cofactor">
    <cofactor evidence="1">
        <name>Zn(2+)</name>
        <dbReference type="ChEBI" id="CHEBI:29105"/>
    </cofactor>
    <text evidence="1">Binds 1 zinc ion.</text>
</comment>
<comment type="subunit">
    <text evidence="1">Part of the RNA polymerase complex.</text>
</comment>
<comment type="subcellular location">
    <subcellularLocation>
        <location evidence="1">Cytoplasm</location>
    </subcellularLocation>
</comment>
<comment type="similarity">
    <text evidence="1">Belongs to the archaeal Rpo10/eukaryotic RPB10 RNA polymerase subunit family.</text>
</comment>
<accession>B8GEG1</accession>
<dbReference type="EC" id="2.7.7.6" evidence="1"/>
<dbReference type="EMBL" id="CP001338">
    <property type="protein sequence ID" value="ACL17662.1"/>
    <property type="molecule type" value="Genomic_DNA"/>
</dbReference>
<dbReference type="RefSeq" id="WP_012618981.1">
    <property type="nucleotide sequence ID" value="NC_011832.1"/>
</dbReference>
<dbReference type="SMR" id="B8GEG1"/>
<dbReference type="STRING" id="521011.Mpal_2381"/>
<dbReference type="GeneID" id="7272103"/>
<dbReference type="KEGG" id="mpl:Mpal_2381"/>
<dbReference type="eggNOG" id="arCOG04244">
    <property type="taxonomic scope" value="Archaea"/>
</dbReference>
<dbReference type="HOGENOM" id="CLU_143122_1_1_2"/>
<dbReference type="OrthoDB" id="371754at2157"/>
<dbReference type="Proteomes" id="UP000002457">
    <property type="component" value="Chromosome"/>
</dbReference>
<dbReference type="GO" id="GO:0005737">
    <property type="term" value="C:cytoplasm"/>
    <property type="evidence" value="ECO:0007669"/>
    <property type="project" value="UniProtKB-SubCell"/>
</dbReference>
<dbReference type="GO" id="GO:0000428">
    <property type="term" value="C:DNA-directed RNA polymerase complex"/>
    <property type="evidence" value="ECO:0007669"/>
    <property type="project" value="UniProtKB-KW"/>
</dbReference>
<dbReference type="GO" id="GO:0003677">
    <property type="term" value="F:DNA binding"/>
    <property type="evidence" value="ECO:0007669"/>
    <property type="project" value="InterPro"/>
</dbReference>
<dbReference type="GO" id="GO:0003899">
    <property type="term" value="F:DNA-directed RNA polymerase activity"/>
    <property type="evidence" value="ECO:0007669"/>
    <property type="project" value="UniProtKB-UniRule"/>
</dbReference>
<dbReference type="GO" id="GO:0008270">
    <property type="term" value="F:zinc ion binding"/>
    <property type="evidence" value="ECO:0007669"/>
    <property type="project" value="UniProtKB-UniRule"/>
</dbReference>
<dbReference type="GO" id="GO:0006351">
    <property type="term" value="P:DNA-templated transcription"/>
    <property type="evidence" value="ECO:0007669"/>
    <property type="project" value="UniProtKB-UniRule"/>
</dbReference>
<dbReference type="Gene3D" id="1.10.10.60">
    <property type="entry name" value="Homeodomain-like"/>
    <property type="match status" value="1"/>
</dbReference>
<dbReference type="HAMAP" id="MF_00250">
    <property type="entry name" value="RNApol_arch_Rpo10"/>
    <property type="match status" value="1"/>
</dbReference>
<dbReference type="InterPro" id="IPR023580">
    <property type="entry name" value="RNA_pol_su_RPB10"/>
</dbReference>
<dbReference type="InterPro" id="IPR020789">
    <property type="entry name" value="RNA_pol_suN_Zn-BS"/>
</dbReference>
<dbReference type="InterPro" id="IPR000268">
    <property type="entry name" value="RPABC5/Rpb10"/>
</dbReference>
<dbReference type="NCBIfam" id="NF003089">
    <property type="entry name" value="PRK04016.1"/>
    <property type="match status" value="1"/>
</dbReference>
<dbReference type="PANTHER" id="PTHR23431:SF3">
    <property type="entry name" value="DNA-DIRECTED RNA POLYMERASES I, II, AND III SUBUNIT RPABC5"/>
    <property type="match status" value="1"/>
</dbReference>
<dbReference type="PANTHER" id="PTHR23431">
    <property type="entry name" value="DNA-DIRECTED RNA POLYMERASES I, II, AND III SUBUNIT RPABC5 FAMILY MEMBER"/>
    <property type="match status" value="1"/>
</dbReference>
<dbReference type="Pfam" id="PF01194">
    <property type="entry name" value="RNA_pol_N"/>
    <property type="match status" value="1"/>
</dbReference>
<dbReference type="PIRSF" id="PIRSF005653">
    <property type="entry name" value="RNA_pol_N/8_sub"/>
    <property type="match status" value="1"/>
</dbReference>
<dbReference type="SUPFAM" id="SSF46924">
    <property type="entry name" value="RNA polymerase subunit RPB10"/>
    <property type="match status" value="1"/>
</dbReference>
<dbReference type="PROSITE" id="PS01112">
    <property type="entry name" value="RNA_POL_N_8KD"/>
    <property type="match status" value="1"/>
</dbReference>
<gene>
    <name evidence="1" type="primary">rpo10</name>
    <name evidence="1" type="synonym">rpoN</name>
    <name type="ordered locus">Mpal_2381</name>
</gene>
<protein>
    <recommendedName>
        <fullName evidence="1">DNA-directed RNA polymerase subunit Rpo10</fullName>
        <ecNumber evidence="1">2.7.7.6</ecNumber>
    </recommendedName>
    <alternativeName>
        <fullName evidence="1">DNA-directed RNA polymerase subunit N</fullName>
    </alternativeName>
</protein>
<feature type="chain" id="PRO_1000194779" description="DNA-directed RNA polymerase subunit Rpo10">
    <location>
        <begin position="1"/>
        <end position="62"/>
    </location>
</feature>
<feature type="binding site" evidence="1">
    <location>
        <position position="6"/>
    </location>
    <ligand>
        <name>Zn(2+)</name>
        <dbReference type="ChEBI" id="CHEBI:29105"/>
    </ligand>
</feature>
<feature type="binding site" evidence="1">
    <location>
        <position position="9"/>
    </location>
    <ligand>
        <name>Zn(2+)</name>
        <dbReference type="ChEBI" id="CHEBI:29105"/>
    </ligand>
</feature>
<feature type="binding site" evidence="1">
    <location>
        <position position="43"/>
    </location>
    <ligand>
        <name>Zn(2+)</name>
        <dbReference type="ChEBI" id="CHEBI:29105"/>
    </ligand>
</feature>
<feature type="binding site" evidence="1">
    <location>
        <position position="44"/>
    </location>
    <ligand>
        <name>Zn(2+)</name>
        <dbReference type="ChEBI" id="CHEBI:29105"/>
    </ligand>
</feature>
<proteinExistence type="inferred from homology"/>
<evidence type="ECO:0000255" key="1">
    <source>
        <dbReference type="HAMAP-Rule" id="MF_00250"/>
    </source>
</evidence>
<organism>
    <name type="scientific">Methanosphaerula palustris (strain ATCC BAA-1556 / DSM 19958 / E1-9c)</name>
    <dbReference type="NCBI Taxonomy" id="521011"/>
    <lineage>
        <taxon>Archaea</taxon>
        <taxon>Methanobacteriati</taxon>
        <taxon>Methanobacteriota</taxon>
        <taxon>Stenosarchaea group</taxon>
        <taxon>Methanomicrobia</taxon>
        <taxon>Methanomicrobiales</taxon>
        <taxon>Methanoregulaceae</taxon>
        <taxon>Methanosphaerula</taxon>
    </lineage>
</organism>
<sequence>MIPVRCFTCGKVISTAWEEFKQRRDAGEDPGAILDDLGLTQYCCRRMLLTHKEIIDELNPYQ</sequence>
<keyword id="KW-0963">Cytoplasm</keyword>
<keyword id="KW-0240">DNA-directed RNA polymerase</keyword>
<keyword id="KW-0479">Metal-binding</keyword>
<keyword id="KW-0548">Nucleotidyltransferase</keyword>
<keyword id="KW-1185">Reference proteome</keyword>
<keyword id="KW-0804">Transcription</keyword>
<keyword id="KW-0808">Transferase</keyword>
<keyword id="KW-0862">Zinc</keyword>
<name>RPO10_METPE</name>